<evidence type="ECO:0000250" key="1"/>
<evidence type="ECO:0000255" key="2">
    <source>
        <dbReference type="PROSITE-ProRule" id="PRU00146"/>
    </source>
</evidence>
<evidence type="ECO:0000255" key="3">
    <source>
        <dbReference type="PROSITE-ProRule" id="PRU00538"/>
    </source>
</evidence>
<evidence type="ECO:0000256" key="4">
    <source>
        <dbReference type="SAM" id="MobiDB-lite"/>
    </source>
</evidence>
<evidence type="ECO:0000269" key="5">
    <source>
    </source>
</evidence>
<evidence type="ECO:0000305" key="6"/>
<feature type="chain" id="PRO_0000394250" description="Lysine-specific demethylase 7B">
    <location>
        <begin position="1"/>
        <end position="577"/>
    </location>
</feature>
<feature type="domain" description="JmjC" evidence="3">
    <location>
        <begin position="198"/>
        <end position="354"/>
    </location>
</feature>
<feature type="zinc finger region" description="PHD-type" evidence="2">
    <location>
        <begin position="5"/>
        <end position="56"/>
    </location>
</feature>
<feature type="region of interest" description="Disordered" evidence="4">
    <location>
        <begin position="460"/>
        <end position="513"/>
    </location>
</feature>
<feature type="compositionally biased region" description="Basic residues" evidence="4">
    <location>
        <begin position="472"/>
        <end position="502"/>
    </location>
</feature>
<feature type="binding site" evidence="1">
    <location>
        <position position="247"/>
    </location>
    <ligand>
        <name>substrate</name>
    </ligand>
</feature>
<feature type="binding site" evidence="3">
    <location>
        <position position="250"/>
    </location>
    <ligand>
        <name>Fe cation</name>
        <dbReference type="ChEBI" id="CHEBI:24875"/>
        <note>catalytic</note>
    </ligand>
</feature>
<feature type="binding site" evidence="3">
    <location>
        <position position="252"/>
    </location>
    <ligand>
        <name>Fe cation</name>
        <dbReference type="ChEBI" id="CHEBI:24875"/>
        <note>catalytic</note>
    </ligand>
</feature>
<feature type="binding site" evidence="1">
    <location>
        <position position="267"/>
    </location>
    <ligand>
        <name>substrate</name>
    </ligand>
</feature>
<feature type="binding site" evidence="3">
    <location>
        <position position="322"/>
    </location>
    <ligand>
        <name>Fe cation</name>
        <dbReference type="ChEBI" id="CHEBI:24875"/>
        <note>catalytic</note>
    </ligand>
</feature>
<protein>
    <recommendedName>
        <fullName>Lysine-specific demethylase 7B</fullName>
        <shortName>DrKDM7b</shortName>
        <ecNumber>1.14.11.-</ecNumber>
    </recommendedName>
    <alternativeName>
        <fullName>JmjC domain-containing histone demethylation protein 1D-B</fullName>
    </alternativeName>
</protein>
<dbReference type="EC" id="1.14.11.-"/>
<dbReference type="EMBL" id="CU468035">
    <property type="status" value="NOT_ANNOTATED_CDS"/>
    <property type="molecule type" value="Genomic_DNA"/>
</dbReference>
<dbReference type="SMR" id="P0CF52"/>
<dbReference type="STRING" id="7955.ENSDARP00000050378"/>
<dbReference type="PaxDb" id="7955-ENSDARP00000050378"/>
<dbReference type="AGR" id="ZFIN:ZDB-GENE-050309-32"/>
<dbReference type="ZFIN" id="ZDB-GENE-050309-32">
    <property type="gene designation" value="kdm7ab"/>
</dbReference>
<dbReference type="eggNOG" id="KOG1633">
    <property type="taxonomic scope" value="Eukaryota"/>
</dbReference>
<dbReference type="eggNOG" id="KOG1634">
    <property type="taxonomic scope" value="Eukaryota"/>
</dbReference>
<dbReference type="InParanoid" id="P0CF52"/>
<dbReference type="PhylomeDB" id="P0CF52"/>
<dbReference type="PRO" id="PR:P0CF52"/>
<dbReference type="Proteomes" id="UP000000437">
    <property type="component" value="Unplaced"/>
</dbReference>
<dbReference type="GO" id="GO:0005634">
    <property type="term" value="C:nucleus"/>
    <property type="evidence" value="ECO:0007669"/>
    <property type="project" value="UniProtKB-SubCell"/>
</dbReference>
<dbReference type="GO" id="GO:0016706">
    <property type="term" value="F:2-oxoglutarate-dependent dioxygenase activity"/>
    <property type="evidence" value="ECO:0000250"/>
    <property type="project" value="UniProtKB"/>
</dbReference>
<dbReference type="GO" id="GO:0032452">
    <property type="term" value="F:histone demethylase activity"/>
    <property type="evidence" value="ECO:0000318"/>
    <property type="project" value="GO_Central"/>
</dbReference>
<dbReference type="GO" id="GO:0071558">
    <property type="term" value="F:histone H3K27me2/H3K27me3 demethylase activity"/>
    <property type="evidence" value="ECO:0000314"/>
    <property type="project" value="ZFIN"/>
</dbReference>
<dbReference type="GO" id="GO:0051864">
    <property type="term" value="F:histone H3K36 demethylase activity"/>
    <property type="evidence" value="ECO:0000250"/>
    <property type="project" value="UniProtKB"/>
</dbReference>
<dbReference type="GO" id="GO:0032454">
    <property type="term" value="F:histone H3K9 demethylase activity"/>
    <property type="evidence" value="ECO:0000314"/>
    <property type="project" value="ZFIN"/>
</dbReference>
<dbReference type="GO" id="GO:0035575">
    <property type="term" value="F:histone H4K20 demethylase activity"/>
    <property type="evidence" value="ECO:0000250"/>
    <property type="project" value="UniProtKB"/>
</dbReference>
<dbReference type="GO" id="GO:0003712">
    <property type="term" value="F:transcription coregulator activity"/>
    <property type="evidence" value="ECO:0000318"/>
    <property type="project" value="GO_Central"/>
</dbReference>
<dbReference type="GO" id="GO:0008270">
    <property type="term" value="F:zinc ion binding"/>
    <property type="evidence" value="ECO:0007669"/>
    <property type="project" value="UniProtKB-KW"/>
</dbReference>
<dbReference type="GO" id="GO:0006338">
    <property type="term" value="P:chromatin remodeling"/>
    <property type="evidence" value="ECO:0000318"/>
    <property type="project" value="GO_Central"/>
</dbReference>
<dbReference type="GO" id="GO:0030901">
    <property type="term" value="P:midbrain development"/>
    <property type="evidence" value="ECO:0000315"/>
    <property type="project" value="UniProtKB"/>
</dbReference>
<dbReference type="GO" id="GO:0006357">
    <property type="term" value="P:regulation of transcription by RNA polymerase II"/>
    <property type="evidence" value="ECO:0000318"/>
    <property type="project" value="GO_Central"/>
</dbReference>
<dbReference type="FunFam" id="2.60.120.650:FF:000021">
    <property type="entry name" value="Lysine-specific demethylase 7A"/>
    <property type="match status" value="1"/>
</dbReference>
<dbReference type="FunFam" id="3.30.40.10:FF:000193">
    <property type="entry name" value="lysine-specific demethylase PHF2 isoform X1"/>
    <property type="match status" value="1"/>
</dbReference>
<dbReference type="Gene3D" id="1.20.58.1360">
    <property type="match status" value="1"/>
</dbReference>
<dbReference type="Gene3D" id="2.60.120.650">
    <property type="entry name" value="Cupin"/>
    <property type="match status" value="1"/>
</dbReference>
<dbReference type="InterPro" id="IPR041070">
    <property type="entry name" value="JHD"/>
</dbReference>
<dbReference type="InterPro" id="IPR050690">
    <property type="entry name" value="JHDM1_Histone_Demethylase"/>
</dbReference>
<dbReference type="InterPro" id="IPR003347">
    <property type="entry name" value="JmjC_dom"/>
</dbReference>
<dbReference type="InterPro" id="IPR019786">
    <property type="entry name" value="Zinc_finger_PHD-type_CS"/>
</dbReference>
<dbReference type="InterPro" id="IPR011011">
    <property type="entry name" value="Znf_FYVE_PHD"/>
</dbReference>
<dbReference type="InterPro" id="IPR001965">
    <property type="entry name" value="Znf_PHD"/>
</dbReference>
<dbReference type="InterPro" id="IPR019787">
    <property type="entry name" value="Znf_PHD-finger"/>
</dbReference>
<dbReference type="PANTHER" id="PTHR23123">
    <property type="entry name" value="PHD/F-BOX CONTAINING PROTEIN"/>
    <property type="match status" value="1"/>
</dbReference>
<dbReference type="Pfam" id="PF17811">
    <property type="entry name" value="JHD"/>
    <property type="match status" value="1"/>
</dbReference>
<dbReference type="Pfam" id="PF02373">
    <property type="entry name" value="JmjC"/>
    <property type="match status" value="1"/>
</dbReference>
<dbReference type="Pfam" id="PF00628">
    <property type="entry name" value="PHD"/>
    <property type="match status" value="1"/>
</dbReference>
<dbReference type="SMART" id="SM00558">
    <property type="entry name" value="JmjC"/>
    <property type="match status" value="1"/>
</dbReference>
<dbReference type="SMART" id="SM00249">
    <property type="entry name" value="PHD"/>
    <property type="match status" value="1"/>
</dbReference>
<dbReference type="SUPFAM" id="SSF51197">
    <property type="entry name" value="Clavaminate synthase-like"/>
    <property type="match status" value="1"/>
</dbReference>
<dbReference type="SUPFAM" id="SSF57903">
    <property type="entry name" value="FYVE/PHD zinc finger"/>
    <property type="match status" value="1"/>
</dbReference>
<dbReference type="PROSITE" id="PS51184">
    <property type="entry name" value="JMJC"/>
    <property type="match status" value="1"/>
</dbReference>
<dbReference type="PROSITE" id="PS01359">
    <property type="entry name" value="ZF_PHD_1"/>
    <property type="match status" value="1"/>
</dbReference>
<dbReference type="PROSITE" id="PS50016">
    <property type="entry name" value="ZF_PHD_2"/>
    <property type="match status" value="1"/>
</dbReference>
<gene>
    <name type="primary">jhdm1db</name>
    <name type="synonym">kdm7b</name>
</gene>
<keyword id="KW-0156">Chromatin regulator</keyword>
<keyword id="KW-0223">Dioxygenase</keyword>
<keyword id="KW-0408">Iron</keyword>
<keyword id="KW-0479">Metal-binding</keyword>
<keyword id="KW-0524">Neurogenesis</keyword>
<keyword id="KW-0539">Nucleus</keyword>
<keyword id="KW-0560">Oxidoreductase</keyword>
<keyword id="KW-1185">Reference proteome</keyword>
<keyword id="KW-0804">Transcription</keyword>
<keyword id="KW-0805">Transcription regulation</keyword>
<keyword id="KW-0862">Zinc</keyword>
<keyword id="KW-0863">Zinc-finger</keyword>
<accession>P0CF52</accession>
<name>KDM7B_DANRE</name>
<sequence length="577" mass="67006">MATAQLYCVCRQPYDVSRFMIECDICKDWFHGSCVEVEEHYAVDIDVYHCPNCDVHHGPSLMKKRRNWHRHDYTEPDDGSKPVQAGTSVFVRELQARTFPSGDEILQPMHGGQVTQRYLERHGFRYPIIVSKREELGLRLPPPDFSIKDVERYVGGNKVIDVIDVARQADSKMKLKAFVKYYYSPQRPKVLNVISLEFSDTKMAELVVVPDIAQKMSWVENYWPDDSYFPKPFVQKYCLMGVKDSYTDFHIDFGGTSVWYHVLWGEKIFYLIKPTPANLALYEEWSSSPNQSEVFFGEKVDKCYKCVVRQGTTLLIPTGWIHAVLTSQDCMAFGGNFLHNLNIGMQLRCYEMERRLKTPDLFKFPYFEAICWYVAKNLLETLKESREENCLPPEYLIKGVKALITALRNWLKREVTEPASEVPDHIRPNHLIKMLTKEIQYLENGNCGNKPMKLQESSICPSTRSAHERGSHARKTARRLRGHHHHHHRHHHHHHHHHHHNHQHSDGPKAPSHLDIYEQHTQEVLKRLEMGPYEEDASFNLKVNGKFNKVSTASAAAAERSLENDLRLVLCNGQIVR</sequence>
<organism>
    <name type="scientific">Danio rerio</name>
    <name type="common">Zebrafish</name>
    <name type="synonym">Brachydanio rerio</name>
    <dbReference type="NCBI Taxonomy" id="7955"/>
    <lineage>
        <taxon>Eukaryota</taxon>
        <taxon>Metazoa</taxon>
        <taxon>Chordata</taxon>
        <taxon>Craniata</taxon>
        <taxon>Vertebrata</taxon>
        <taxon>Euteleostomi</taxon>
        <taxon>Actinopterygii</taxon>
        <taxon>Neopterygii</taxon>
        <taxon>Teleostei</taxon>
        <taxon>Ostariophysi</taxon>
        <taxon>Cypriniformes</taxon>
        <taxon>Danionidae</taxon>
        <taxon>Danioninae</taxon>
        <taxon>Danio</taxon>
    </lineage>
</organism>
<reference key="1">
    <citation type="journal article" date="2013" name="Nature">
        <title>The zebrafish reference genome sequence and its relationship to the human genome.</title>
        <authorList>
            <person name="Howe K."/>
            <person name="Clark M.D."/>
            <person name="Torroja C.F."/>
            <person name="Torrance J."/>
            <person name="Berthelot C."/>
            <person name="Muffato M."/>
            <person name="Collins J.E."/>
            <person name="Humphray S."/>
            <person name="McLaren K."/>
            <person name="Matthews L."/>
            <person name="McLaren S."/>
            <person name="Sealy I."/>
            <person name="Caccamo M."/>
            <person name="Churcher C."/>
            <person name="Scott C."/>
            <person name="Barrett J.C."/>
            <person name="Koch R."/>
            <person name="Rauch G.J."/>
            <person name="White S."/>
            <person name="Chow W."/>
            <person name="Kilian B."/>
            <person name="Quintais L.T."/>
            <person name="Guerra-Assuncao J.A."/>
            <person name="Zhou Y."/>
            <person name="Gu Y."/>
            <person name="Yen J."/>
            <person name="Vogel J.H."/>
            <person name="Eyre T."/>
            <person name="Redmond S."/>
            <person name="Banerjee R."/>
            <person name="Chi J."/>
            <person name="Fu B."/>
            <person name="Langley E."/>
            <person name="Maguire S.F."/>
            <person name="Laird G.K."/>
            <person name="Lloyd D."/>
            <person name="Kenyon E."/>
            <person name="Donaldson S."/>
            <person name="Sehra H."/>
            <person name="Almeida-King J."/>
            <person name="Loveland J."/>
            <person name="Trevanion S."/>
            <person name="Jones M."/>
            <person name="Quail M."/>
            <person name="Willey D."/>
            <person name="Hunt A."/>
            <person name="Burton J."/>
            <person name="Sims S."/>
            <person name="McLay K."/>
            <person name="Plumb B."/>
            <person name="Davis J."/>
            <person name="Clee C."/>
            <person name="Oliver K."/>
            <person name="Clark R."/>
            <person name="Riddle C."/>
            <person name="Elliot D."/>
            <person name="Threadgold G."/>
            <person name="Harden G."/>
            <person name="Ware D."/>
            <person name="Begum S."/>
            <person name="Mortimore B."/>
            <person name="Kerry G."/>
            <person name="Heath P."/>
            <person name="Phillimore B."/>
            <person name="Tracey A."/>
            <person name="Corby N."/>
            <person name="Dunn M."/>
            <person name="Johnson C."/>
            <person name="Wood J."/>
            <person name="Clark S."/>
            <person name="Pelan S."/>
            <person name="Griffiths G."/>
            <person name="Smith M."/>
            <person name="Glithero R."/>
            <person name="Howden P."/>
            <person name="Barker N."/>
            <person name="Lloyd C."/>
            <person name="Stevens C."/>
            <person name="Harley J."/>
            <person name="Holt K."/>
            <person name="Panagiotidis G."/>
            <person name="Lovell J."/>
            <person name="Beasley H."/>
            <person name="Henderson C."/>
            <person name="Gordon D."/>
            <person name="Auger K."/>
            <person name="Wright D."/>
            <person name="Collins J."/>
            <person name="Raisen C."/>
            <person name="Dyer L."/>
            <person name="Leung K."/>
            <person name="Robertson L."/>
            <person name="Ambridge K."/>
            <person name="Leongamornlert D."/>
            <person name="McGuire S."/>
            <person name="Gilderthorp R."/>
            <person name="Griffiths C."/>
            <person name="Manthravadi D."/>
            <person name="Nichol S."/>
            <person name="Barker G."/>
            <person name="Whitehead S."/>
            <person name="Kay M."/>
            <person name="Brown J."/>
            <person name="Murnane C."/>
            <person name="Gray E."/>
            <person name="Humphries M."/>
            <person name="Sycamore N."/>
            <person name="Barker D."/>
            <person name="Saunders D."/>
            <person name="Wallis J."/>
            <person name="Babbage A."/>
            <person name="Hammond S."/>
            <person name="Mashreghi-Mohammadi M."/>
            <person name="Barr L."/>
            <person name="Martin S."/>
            <person name="Wray P."/>
            <person name="Ellington A."/>
            <person name="Matthews N."/>
            <person name="Ellwood M."/>
            <person name="Woodmansey R."/>
            <person name="Clark G."/>
            <person name="Cooper J."/>
            <person name="Tromans A."/>
            <person name="Grafham D."/>
            <person name="Skuce C."/>
            <person name="Pandian R."/>
            <person name="Andrews R."/>
            <person name="Harrison E."/>
            <person name="Kimberley A."/>
            <person name="Garnett J."/>
            <person name="Fosker N."/>
            <person name="Hall R."/>
            <person name="Garner P."/>
            <person name="Kelly D."/>
            <person name="Bird C."/>
            <person name="Palmer S."/>
            <person name="Gehring I."/>
            <person name="Berger A."/>
            <person name="Dooley C.M."/>
            <person name="Ersan-Urun Z."/>
            <person name="Eser C."/>
            <person name="Geiger H."/>
            <person name="Geisler M."/>
            <person name="Karotki L."/>
            <person name="Kirn A."/>
            <person name="Konantz J."/>
            <person name="Konantz M."/>
            <person name="Oberlander M."/>
            <person name="Rudolph-Geiger S."/>
            <person name="Teucke M."/>
            <person name="Lanz C."/>
            <person name="Raddatz G."/>
            <person name="Osoegawa K."/>
            <person name="Zhu B."/>
            <person name="Rapp A."/>
            <person name="Widaa S."/>
            <person name="Langford C."/>
            <person name="Yang F."/>
            <person name="Schuster S.C."/>
            <person name="Carter N.P."/>
            <person name="Harrow J."/>
            <person name="Ning Z."/>
            <person name="Herrero J."/>
            <person name="Searle S.M."/>
            <person name="Enright A."/>
            <person name="Geisler R."/>
            <person name="Plasterk R.H."/>
            <person name="Lee C."/>
            <person name="Westerfield M."/>
            <person name="de Jong P.J."/>
            <person name="Zon L.I."/>
            <person name="Postlethwait J.H."/>
            <person name="Nusslein-Volhard C."/>
            <person name="Hubbard T.J."/>
            <person name="Roest Crollius H."/>
            <person name="Rogers J."/>
            <person name="Stemple D.L."/>
        </authorList>
    </citation>
    <scope>NUCLEOTIDE SEQUENCE [LARGE SCALE GENOMIC DNA]</scope>
    <source>
        <strain>Tuebingen</strain>
    </source>
</reference>
<reference key="2">
    <citation type="journal article" date="2010" name="Genes Dev.">
        <title>KDM7 is a dual demethylase for histone H3 Lys 9 and Lys 27 and functions in brain development.</title>
        <authorList>
            <person name="Tsukada Y."/>
            <person name="Ishitani T."/>
            <person name="Nakayama K.I."/>
        </authorList>
    </citation>
    <scope>FUNCTION</scope>
    <scope>TISSUE SPECIFICITY</scope>
</reference>
<comment type="function">
    <text evidence="1 5">Histone demethylase required for brain development. Specifically demethylates dimethylated 'Lys-9' and 'Lys-27' (H3K9me2 and H3K27me2, respectively) of histone H3 and monomethylated histone H4 'Lys-20' residue (H4K20Me1), thereby playing a central role in histone code (By similarity).</text>
</comment>
<comment type="cofactor">
    <cofactor evidence="1">
        <name>Fe(2+)</name>
        <dbReference type="ChEBI" id="CHEBI:29033"/>
    </cofactor>
    <text evidence="1">Binds 1 Fe(2+) ion per subunit.</text>
</comment>
<comment type="subcellular location">
    <subcellularLocation>
        <location evidence="1">Nucleus</location>
    </subcellularLocation>
</comment>
<comment type="tissue specificity">
    <text evidence="5">Predominantly expressed in brain.</text>
</comment>
<comment type="domain">
    <text evidence="1">The PHD-type zinc finger mediates the binding to H3K4me3. Binding to H3K4me3 prevents its access to H3K9me2 (By similarity).</text>
</comment>
<comment type="similarity">
    <text evidence="6">Belongs to the JHDM1 histone demethylase family. JHDM1D subfamily.</text>
</comment>
<proteinExistence type="evidence at transcript level"/>